<proteinExistence type="inferred from homology"/>
<comment type="function">
    <text evidence="1">Catalyzes the attachment of alanine to tRNA(Ala) in a two-step reaction: alanine is first activated by ATP to form Ala-AMP and then transferred to the acceptor end of tRNA(Ala). Also edits incorrectly charged Ser-tRNA(Ala) and Gly-tRNA(Ala) via its editing domain.</text>
</comment>
<comment type="catalytic activity">
    <reaction evidence="1">
        <text>tRNA(Ala) + L-alanine + ATP = L-alanyl-tRNA(Ala) + AMP + diphosphate</text>
        <dbReference type="Rhea" id="RHEA:12540"/>
        <dbReference type="Rhea" id="RHEA-COMP:9657"/>
        <dbReference type="Rhea" id="RHEA-COMP:9923"/>
        <dbReference type="ChEBI" id="CHEBI:30616"/>
        <dbReference type="ChEBI" id="CHEBI:33019"/>
        <dbReference type="ChEBI" id="CHEBI:57972"/>
        <dbReference type="ChEBI" id="CHEBI:78442"/>
        <dbReference type="ChEBI" id="CHEBI:78497"/>
        <dbReference type="ChEBI" id="CHEBI:456215"/>
        <dbReference type="EC" id="6.1.1.7"/>
    </reaction>
</comment>
<comment type="cofactor">
    <cofactor evidence="1">
        <name>Zn(2+)</name>
        <dbReference type="ChEBI" id="CHEBI:29105"/>
    </cofactor>
    <text evidence="1">Binds 1 zinc ion per subunit.</text>
</comment>
<comment type="subcellular location">
    <subcellularLocation>
        <location evidence="1">Cytoplasm</location>
    </subcellularLocation>
</comment>
<comment type="domain">
    <text evidence="1">Consists of three domains; the N-terminal catalytic domain, the editing domain and the C-terminal C-Ala domain. The editing domain removes incorrectly charged amino acids, while the C-Ala domain, along with tRNA(Ala), serves as a bridge to cooperatively bring together the editing and aminoacylation centers thus stimulating deacylation of misacylated tRNAs.</text>
</comment>
<comment type="similarity">
    <text evidence="1">Belongs to the class-II aminoacyl-tRNA synthetase family.</text>
</comment>
<reference key="1">
    <citation type="journal article" date="2005" name="J. Bacteriol.">
        <title>Insights into genome plasticity and pathogenicity of the plant pathogenic Bacterium Xanthomonas campestris pv. vesicatoria revealed by the complete genome sequence.</title>
        <authorList>
            <person name="Thieme F."/>
            <person name="Koebnik R."/>
            <person name="Bekel T."/>
            <person name="Berger C."/>
            <person name="Boch J."/>
            <person name="Buettner D."/>
            <person name="Caldana C."/>
            <person name="Gaigalat L."/>
            <person name="Goesmann A."/>
            <person name="Kay S."/>
            <person name="Kirchner O."/>
            <person name="Lanz C."/>
            <person name="Linke B."/>
            <person name="McHardy A.C."/>
            <person name="Meyer F."/>
            <person name="Mittenhuber G."/>
            <person name="Nies D.H."/>
            <person name="Niesbach-Kloesgen U."/>
            <person name="Patschkowski T."/>
            <person name="Rueckert C."/>
            <person name="Rupp O."/>
            <person name="Schneiker S."/>
            <person name="Schuster S.C."/>
            <person name="Vorhoelter F.J."/>
            <person name="Weber E."/>
            <person name="Puehler A."/>
            <person name="Bonas U."/>
            <person name="Bartels D."/>
            <person name="Kaiser O."/>
        </authorList>
    </citation>
    <scope>NUCLEOTIDE SEQUENCE [LARGE SCALE GENOMIC DNA]</scope>
    <source>
        <strain>85-10</strain>
    </source>
</reference>
<dbReference type="EC" id="6.1.1.7" evidence="1"/>
<dbReference type="EMBL" id="AM039952">
    <property type="protein sequence ID" value="CAJ23452.1"/>
    <property type="molecule type" value="Genomic_DNA"/>
</dbReference>
<dbReference type="RefSeq" id="WP_011347112.1">
    <property type="nucleotide sequence ID" value="NZ_CP017190.1"/>
</dbReference>
<dbReference type="SMR" id="Q3BUQ7"/>
<dbReference type="STRING" id="456327.BJD11_13665"/>
<dbReference type="KEGG" id="xcv:XCV1775"/>
<dbReference type="eggNOG" id="COG0013">
    <property type="taxonomic scope" value="Bacteria"/>
</dbReference>
<dbReference type="HOGENOM" id="CLU_004485_1_1_6"/>
<dbReference type="Proteomes" id="UP000007069">
    <property type="component" value="Chromosome"/>
</dbReference>
<dbReference type="GO" id="GO:0005829">
    <property type="term" value="C:cytosol"/>
    <property type="evidence" value="ECO:0007669"/>
    <property type="project" value="TreeGrafter"/>
</dbReference>
<dbReference type="GO" id="GO:0004813">
    <property type="term" value="F:alanine-tRNA ligase activity"/>
    <property type="evidence" value="ECO:0007669"/>
    <property type="project" value="UniProtKB-UniRule"/>
</dbReference>
<dbReference type="GO" id="GO:0002161">
    <property type="term" value="F:aminoacyl-tRNA deacylase activity"/>
    <property type="evidence" value="ECO:0007669"/>
    <property type="project" value="TreeGrafter"/>
</dbReference>
<dbReference type="GO" id="GO:0005524">
    <property type="term" value="F:ATP binding"/>
    <property type="evidence" value="ECO:0007669"/>
    <property type="project" value="UniProtKB-UniRule"/>
</dbReference>
<dbReference type="GO" id="GO:0000049">
    <property type="term" value="F:tRNA binding"/>
    <property type="evidence" value="ECO:0007669"/>
    <property type="project" value="UniProtKB-KW"/>
</dbReference>
<dbReference type="GO" id="GO:0008270">
    <property type="term" value="F:zinc ion binding"/>
    <property type="evidence" value="ECO:0007669"/>
    <property type="project" value="UniProtKB-UniRule"/>
</dbReference>
<dbReference type="GO" id="GO:0006419">
    <property type="term" value="P:alanyl-tRNA aminoacylation"/>
    <property type="evidence" value="ECO:0007669"/>
    <property type="project" value="UniProtKB-UniRule"/>
</dbReference>
<dbReference type="GO" id="GO:0045892">
    <property type="term" value="P:negative regulation of DNA-templated transcription"/>
    <property type="evidence" value="ECO:0007669"/>
    <property type="project" value="TreeGrafter"/>
</dbReference>
<dbReference type="CDD" id="cd00673">
    <property type="entry name" value="AlaRS_core"/>
    <property type="match status" value="1"/>
</dbReference>
<dbReference type="FunFam" id="3.10.310.40:FF:000001">
    <property type="entry name" value="Alanine--tRNA ligase"/>
    <property type="match status" value="1"/>
</dbReference>
<dbReference type="FunFam" id="3.30.54.20:FF:000001">
    <property type="entry name" value="Alanine--tRNA ligase"/>
    <property type="match status" value="1"/>
</dbReference>
<dbReference type="FunFam" id="3.30.930.10:FF:000004">
    <property type="entry name" value="Alanine--tRNA ligase"/>
    <property type="match status" value="1"/>
</dbReference>
<dbReference type="FunFam" id="3.30.980.10:FF:000004">
    <property type="entry name" value="Alanine--tRNA ligase, cytoplasmic"/>
    <property type="match status" value="1"/>
</dbReference>
<dbReference type="Gene3D" id="2.40.30.130">
    <property type="match status" value="1"/>
</dbReference>
<dbReference type="Gene3D" id="3.10.310.40">
    <property type="match status" value="1"/>
</dbReference>
<dbReference type="Gene3D" id="3.30.54.20">
    <property type="match status" value="1"/>
</dbReference>
<dbReference type="Gene3D" id="6.10.250.550">
    <property type="match status" value="1"/>
</dbReference>
<dbReference type="Gene3D" id="3.30.930.10">
    <property type="entry name" value="Bira Bifunctional Protein, Domain 2"/>
    <property type="match status" value="1"/>
</dbReference>
<dbReference type="Gene3D" id="3.30.980.10">
    <property type="entry name" value="Threonyl-trna Synthetase, Chain A, domain 2"/>
    <property type="match status" value="1"/>
</dbReference>
<dbReference type="HAMAP" id="MF_00036_B">
    <property type="entry name" value="Ala_tRNA_synth_B"/>
    <property type="match status" value="1"/>
</dbReference>
<dbReference type="InterPro" id="IPR045864">
    <property type="entry name" value="aa-tRNA-synth_II/BPL/LPL"/>
</dbReference>
<dbReference type="InterPro" id="IPR002318">
    <property type="entry name" value="Ala-tRNA-lgiase_IIc"/>
</dbReference>
<dbReference type="InterPro" id="IPR018162">
    <property type="entry name" value="Ala-tRNA-ligase_IIc_anticod-bd"/>
</dbReference>
<dbReference type="InterPro" id="IPR018165">
    <property type="entry name" value="Ala-tRNA-synth_IIc_core"/>
</dbReference>
<dbReference type="InterPro" id="IPR018164">
    <property type="entry name" value="Ala-tRNA-synth_IIc_N"/>
</dbReference>
<dbReference type="InterPro" id="IPR050058">
    <property type="entry name" value="Ala-tRNA_ligase"/>
</dbReference>
<dbReference type="InterPro" id="IPR023033">
    <property type="entry name" value="Ala_tRNA_ligase_euk/bac"/>
</dbReference>
<dbReference type="InterPro" id="IPR003156">
    <property type="entry name" value="DHHA1_dom"/>
</dbReference>
<dbReference type="InterPro" id="IPR018163">
    <property type="entry name" value="Thr/Ala-tRNA-synth_IIc_edit"/>
</dbReference>
<dbReference type="InterPro" id="IPR009000">
    <property type="entry name" value="Transl_B-barrel_sf"/>
</dbReference>
<dbReference type="InterPro" id="IPR012947">
    <property type="entry name" value="tRNA_SAD"/>
</dbReference>
<dbReference type="NCBIfam" id="TIGR00344">
    <property type="entry name" value="alaS"/>
    <property type="match status" value="1"/>
</dbReference>
<dbReference type="PANTHER" id="PTHR11777:SF9">
    <property type="entry name" value="ALANINE--TRNA LIGASE, CYTOPLASMIC"/>
    <property type="match status" value="1"/>
</dbReference>
<dbReference type="PANTHER" id="PTHR11777">
    <property type="entry name" value="ALANYL-TRNA SYNTHETASE"/>
    <property type="match status" value="1"/>
</dbReference>
<dbReference type="Pfam" id="PF02272">
    <property type="entry name" value="DHHA1"/>
    <property type="match status" value="1"/>
</dbReference>
<dbReference type="Pfam" id="PF01411">
    <property type="entry name" value="tRNA-synt_2c"/>
    <property type="match status" value="1"/>
</dbReference>
<dbReference type="Pfam" id="PF07973">
    <property type="entry name" value="tRNA_SAD"/>
    <property type="match status" value="1"/>
</dbReference>
<dbReference type="PRINTS" id="PR00980">
    <property type="entry name" value="TRNASYNTHALA"/>
</dbReference>
<dbReference type="SMART" id="SM00863">
    <property type="entry name" value="tRNA_SAD"/>
    <property type="match status" value="1"/>
</dbReference>
<dbReference type="SUPFAM" id="SSF55681">
    <property type="entry name" value="Class II aaRS and biotin synthetases"/>
    <property type="match status" value="1"/>
</dbReference>
<dbReference type="SUPFAM" id="SSF101353">
    <property type="entry name" value="Putative anticodon-binding domain of alanyl-tRNA synthetase (AlaRS)"/>
    <property type="match status" value="1"/>
</dbReference>
<dbReference type="SUPFAM" id="SSF55186">
    <property type="entry name" value="ThrRS/AlaRS common domain"/>
    <property type="match status" value="1"/>
</dbReference>
<dbReference type="SUPFAM" id="SSF50447">
    <property type="entry name" value="Translation proteins"/>
    <property type="match status" value="1"/>
</dbReference>
<dbReference type="PROSITE" id="PS50860">
    <property type="entry name" value="AA_TRNA_LIGASE_II_ALA"/>
    <property type="match status" value="1"/>
</dbReference>
<gene>
    <name evidence="1" type="primary">alaS</name>
    <name type="ordered locus">XCV1775</name>
</gene>
<accession>Q3BUQ7</accession>
<protein>
    <recommendedName>
        <fullName evidence="1">Alanine--tRNA ligase</fullName>
        <ecNumber evidence="1">6.1.1.7</ecNumber>
    </recommendedName>
    <alternativeName>
        <fullName evidence="1">Alanyl-tRNA synthetase</fullName>
        <shortName evidence="1">AlaRS</shortName>
    </alternativeName>
</protein>
<feature type="chain" id="PRO_0000347864" description="Alanine--tRNA ligase">
    <location>
        <begin position="1"/>
        <end position="882"/>
    </location>
</feature>
<feature type="binding site" evidence="1">
    <location>
        <position position="570"/>
    </location>
    <ligand>
        <name>Zn(2+)</name>
        <dbReference type="ChEBI" id="CHEBI:29105"/>
    </ligand>
</feature>
<feature type="binding site" evidence="1">
    <location>
        <position position="574"/>
    </location>
    <ligand>
        <name>Zn(2+)</name>
        <dbReference type="ChEBI" id="CHEBI:29105"/>
    </ligand>
</feature>
<feature type="binding site" evidence="1">
    <location>
        <position position="672"/>
    </location>
    <ligand>
        <name>Zn(2+)</name>
        <dbReference type="ChEBI" id="CHEBI:29105"/>
    </ligand>
</feature>
<feature type="binding site" evidence="1">
    <location>
        <position position="676"/>
    </location>
    <ligand>
        <name>Zn(2+)</name>
        <dbReference type="ChEBI" id="CHEBI:29105"/>
    </ligand>
</feature>
<sequence>MNAPAKFSTSQIRSDFLAFFEGKGHTIVPSAPLVPGNDPTLLFTNSGMVQFKDVFLGAEKRSYVRAADVQRCLRAGGKHNDLDSVGYTARHHTFFEMLGNWSFGDYFKKDAIAWAWELLTQVWKLPADRLLVTVYHTDEEAFALWRDMIGIPESRIVRIGDNKGAPYASDNFWQMADTGPCGPCTEIFFDHGDHIAGGPPGSPDEDGDRFIEIWNLVFMQFDRQPDGTLVPLPAPCVDTGMGLERLAAILQHVHTNYEIDLFQALIGKASALTGITDLENKSLRVIADHIRACSFLIVDGVLPSNEGRGYVLRRIIRRALRHGWMLGVRQPFFSKMVPTLVELMGEAYPELVVAQDTVARALLAEEERFAETLDAGMKIFDEVASRSQDIIPGADAFRLYDTYGFPVDLTADIARERGMRVDMEGFEFAMERQRETARAAGKFGGGVALPADLVASMSPTVFLGYEAYDADALKVVALLKQGRPVERAEAGDEVIVFTDRTPFYAESGGQVGDSGQLSGPGVSINVTDTQKFAGQFHGHVGRISEGALALGDVLAGGIDTQRRGKTILNHSATHLLHAALREVLGTHVQQKGSLVAPDRLRFDFSHFQPFTADELAVIERKVNAEVRANHGVEVHNMAMQEALDFGAMALFGEKYGENVRVLKMGGYSTELCGGTHVTRTGDIGLFKITSEGGVSSGVRRIEAVTGQGALDYVADEERRLLEAANLLGGNTSEVVDKVRALTERQKRLERELESLKAKLASGATADLGASAIDVVGVKVVAVRLEGFDAKALRDAMDRLKQQLGDSVIVLAGASGGKVALVAGVNGSPTGKVKAGELLGHIASQIGGKGGGRPDLAQGGGEDGPALATALDGVPLWVKQHLG</sequence>
<organism>
    <name type="scientific">Xanthomonas euvesicatoria pv. vesicatoria (strain 85-10)</name>
    <name type="common">Xanthomonas campestris pv. vesicatoria</name>
    <dbReference type="NCBI Taxonomy" id="316273"/>
    <lineage>
        <taxon>Bacteria</taxon>
        <taxon>Pseudomonadati</taxon>
        <taxon>Pseudomonadota</taxon>
        <taxon>Gammaproteobacteria</taxon>
        <taxon>Lysobacterales</taxon>
        <taxon>Lysobacteraceae</taxon>
        <taxon>Xanthomonas</taxon>
    </lineage>
</organism>
<keyword id="KW-0030">Aminoacyl-tRNA synthetase</keyword>
<keyword id="KW-0067">ATP-binding</keyword>
<keyword id="KW-0963">Cytoplasm</keyword>
<keyword id="KW-0436">Ligase</keyword>
<keyword id="KW-0479">Metal-binding</keyword>
<keyword id="KW-0547">Nucleotide-binding</keyword>
<keyword id="KW-0648">Protein biosynthesis</keyword>
<keyword id="KW-0694">RNA-binding</keyword>
<keyword id="KW-0820">tRNA-binding</keyword>
<keyword id="KW-0862">Zinc</keyword>
<name>SYA_XANE5</name>
<evidence type="ECO:0000255" key="1">
    <source>
        <dbReference type="HAMAP-Rule" id="MF_00036"/>
    </source>
</evidence>